<protein>
    <recommendedName>
        <fullName evidence="1">Arginine--tRNA ligase</fullName>
        <ecNumber evidence="1">6.1.1.19</ecNumber>
    </recommendedName>
    <alternativeName>
        <fullName evidence="1">Arginyl-tRNA synthetase</fullName>
        <shortName evidence="1">ArgRS</shortName>
    </alternativeName>
</protein>
<feature type="chain" id="PRO_0000151571" description="Arginine--tRNA ligase">
    <location>
        <begin position="1"/>
        <end position="586"/>
    </location>
</feature>
<feature type="short sequence motif" description="'HIGH' region">
    <location>
        <begin position="133"/>
        <end position="143"/>
    </location>
</feature>
<reference key="1">
    <citation type="journal article" date="2003" name="Nature">
        <title>Unique physiological and pathogenic features of Leptospira interrogans revealed by whole-genome sequencing.</title>
        <authorList>
            <person name="Ren S.-X."/>
            <person name="Fu G."/>
            <person name="Jiang X.-G."/>
            <person name="Zeng R."/>
            <person name="Miao Y.-G."/>
            <person name="Xu H."/>
            <person name="Zhang Y.-X."/>
            <person name="Xiong H."/>
            <person name="Lu G."/>
            <person name="Lu L.-F."/>
            <person name="Jiang H.-Q."/>
            <person name="Jia J."/>
            <person name="Tu Y.-F."/>
            <person name="Jiang J.-X."/>
            <person name="Gu W.-Y."/>
            <person name="Zhang Y.-Q."/>
            <person name="Cai Z."/>
            <person name="Sheng H.-H."/>
            <person name="Yin H.-F."/>
            <person name="Zhang Y."/>
            <person name="Zhu G.-F."/>
            <person name="Wan M."/>
            <person name="Huang H.-L."/>
            <person name="Qian Z."/>
            <person name="Wang S.-Y."/>
            <person name="Ma W."/>
            <person name="Yao Z.-J."/>
            <person name="Shen Y."/>
            <person name="Qiang B.-Q."/>
            <person name="Xia Q.-C."/>
            <person name="Guo X.-K."/>
            <person name="Danchin A."/>
            <person name="Saint Girons I."/>
            <person name="Somerville R.L."/>
            <person name="Wen Y.-M."/>
            <person name="Shi M.-H."/>
            <person name="Chen Z."/>
            <person name="Xu J.-G."/>
            <person name="Zhao G.-P."/>
        </authorList>
    </citation>
    <scope>NUCLEOTIDE SEQUENCE [LARGE SCALE GENOMIC DNA]</scope>
    <source>
        <strain>56601</strain>
    </source>
</reference>
<comment type="catalytic activity">
    <reaction evidence="1">
        <text>tRNA(Arg) + L-arginine + ATP = L-arginyl-tRNA(Arg) + AMP + diphosphate</text>
        <dbReference type="Rhea" id="RHEA:20301"/>
        <dbReference type="Rhea" id="RHEA-COMP:9658"/>
        <dbReference type="Rhea" id="RHEA-COMP:9673"/>
        <dbReference type="ChEBI" id="CHEBI:30616"/>
        <dbReference type="ChEBI" id="CHEBI:32682"/>
        <dbReference type="ChEBI" id="CHEBI:33019"/>
        <dbReference type="ChEBI" id="CHEBI:78442"/>
        <dbReference type="ChEBI" id="CHEBI:78513"/>
        <dbReference type="ChEBI" id="CHEBI:456215"/>
        <dbReference type="EC" id="6.1.1.19"/>
    </reaction>
</comment>
<comment type="subunit">
    <text evidence="1">Monomer.</text>
</comment>
<comment type="subcellular location">
    <subcellularLocation>
        <location evidence="1">Cytoplasm</location>
    </subcellularLocation>
</comment>
<comment type="similarity">
    <text evidence="1">Belongs to the class-I aminoacyl-tRNA synthetase family.</text>
</comment>
<keyword id="KW-0030">Aminoacyl-tRNA synthetase</keyword>
<keyword id="KW-0067">ATP-binding</keyword>
<keyword id="KW-0963">Cytoplasm</keyword>
<keyword id="KW-0436">Ligase</keyword>
<keyword id="KW-0547">Nucleotide-binding</keyword>
<keyword id="KW-0648">Protein biosynthesis</keyword>
<keyword id="KW-1185">Reference proteome</keyword>
<name>SYR_LEPIN</name>
<evidence type="ECO:0000255" key="1">
    <source>
        <dbReference type="HAMAP-Rule" id="MF_00123"/>
    </source>
</evidence>
<sequence length="586" mass="66934">MKENETLKQIVLKTLEESVNSLISSFPEVEKETFKIKIEYSRDEKFGDYSTSFALENSKLLKRNPIQVSKELVEILQKRTDLFEKVDFTPPGFVNFRISTSFLLNYIETSVLSGNYFPKVDLPLKINLEFVSANPTGPLNIVSARAAANGDTMASLLKAIGHNVDKEFYINDYGNQVFLLGVSTLVRIRELKGEEGTQQETTDDTPIEIILEKNILPAEGYRGEYIKDIASSLLKDPKKNVTIENLLKQKKYKELAELCAVWTIENNLIWQRKDLDAFGVEFDRYFSERTLHEADKVLSVMKDLEKSGKIFQEDGKKVFRSTEYGDDKDRVVVRDDGRPTYLLADIAYHKDKIERGYDKIYDIWGPDHHGYISRLSGAVQSLGYKKENFKVIISQQVNLLESGQKVKMSKRAGSFQTMSDLIGFLGKHGKDVGRYFFVMRSLDAPLDFDLDLAKDESDKNPVFYLQYAHARICSIFKEVGDQTSKEATAILEMSEERKRLLFWIARFPEEIFDSANAMEPHRVTNYLQSFAKAFTSFYLAKDNRLKDASKEVRLGLARICLAAKNVLAEGLKLIGVSAPERMEKEN</sequence>
<proteinExistence type="inferred from homology"/>
<dbReference type="EC" id="6.1.1.19" evidence="1"/>
<dbReference type="EMBL" id="AE010300">
    <property type="protein sequence ID" value="AAN48887.2"/>
    <property type="molecule type" value="Genomic_DNA"/>
</dbReference>
<dbReference type="RefSeq" id="NP_711869.2">
    <property type="nucleotide sequence ID" value="NC_004342.2"/>
</dbReference>
<dbReference type="RefSeq" id="WP_000662007.1">
    <property type="nucleotide sequence ID" value="NC_004342.2"/>
</dbReference>
<dbReference type="SMR" id="Q8F5J3"/>
<dbReference type="FunCoup" id="Q8F5J3">
    <property type="interactions" value="458"/>
</dbReference>
<dbReference type="STRING" id="189518.LA_1688"/>
<dbReference type="PaxDb" id="189518-LA_1688"/>
<dbReference type="EnsemblBacteria" id="AAN48887">
    <property type="protein sequence ID" value="AAN48887"/>
    <property type="gene ID" value="LA_1688"/>
</dbReference>
<dbReference type="KEGG" id="lil:LA_1688"/>
<dbReference type="PATRIC" id="fig|189518.3.peg.1681"/>
<dbReference type="HOGENOM" id="CLU_006406_0_1_12"/>
<dbReference type="InParanoid" id="Q8F5J3"/>
<dbReference type="OrthoDB" id="9805987at2"/>
<dbReference type="Proteomes" id="UP000001408">
    <property type="component" value="Chromosome I"/>
</dbReference>
<dbReference type="GO" id="GO:0005737">
    <property type="term" value="C:cytoplasm"/>
    <property type="evidence" value="ECO:0007669"/>
    <property type="project" value="UniProtKB-SubCell"/>
</dbReference>
<dbReference type="GO" id="GO:0004814">
    <property type="term" value="F:arginine-tRNA ligase activity"/>
    <property type="evidence" value="ECO:0000318"/>
    <property type="project" value="GO_Central"/>
</dbReference>
<dbReference type="GO" id="GO:0005524">
    <property type="term" value="F:ATP binding"/>
    <property type="evidence" value="ECO:0007669"/>
    <property type="project" value="UniProtKB-UniRule"/>
</dbReference>
<dbReference type="GO" id="GO:0006420">
    <property type="term" value="P:arginyl-tRNA aminoacylation"/>
    <property type="evidence" value="ECO:0000318"/>
    <property type="project" value="GO_Central"/>
</dbReference>
<dbReference type="CDD" id="cd00671">
    <property type="entry name" value="ArgRS_core"/>
    <property type="match status" value="1"/>
</dbReference>
<dbReference type="FunFam" id="1.10.730.10:FF:000008">
    <property type="entry name" value="Arginine--tRNA ligase"/>
    <property type="match status" value="1"/>
</dbReference>
<dbReference type="FunFam" id="3.40.50.620:FF:000062">
    <property type="entry name" value="Arginine--tRNA ligase"/>
    <property type="match status" value="1"/>
</dbReference>
<dbReference type="Gene3D" id="3.30.1360.70">
    <property type="entry name" value="Arginyl tRNA synthetase N-terminal domain"/>
    <property type="match status" value="1"/>
</dbReference>
<dbReference type="Gene3D" id="3.40.50.620">
    <property type="entry name" value="HUPs"/>
    <property type="match status" value="1"/>
</dbReference>
<dbReference type="Gene3D" id="1.10.730.10">
    <property type="entry name" value="Isoleucyl-tRNA Synthetase, Domain 1"/>
    <property type="match status" value="1"/>
</dbReference>
<dbReference type="HAMAP" id="MF_00123">
    <property type="entry name" value="Arg_tRNA_synth"/>
    <property type="match status" value="1"/>
</dbReference>
<dbReference type="InterPro" id="IPR001278">
    <property type="entry name" value="Arg-tRNA-ligase"/>
</dbReference>
<dbReference type="InterPro" id="IPR005148">
    <property type="entry name" value="Arg-tRNA-synth_N"/>
</dbReference>
<dbReference type="InterPro" id="IPR036695">
    <property type="entry name" value="Arg-tRNA-synth_N_sf"/>
</dbReference>
<dbReference type="InterPro" id="IPR035684">
    <property type="entry name" value="ArgRS_core"/>
</dbReference>
<dbReference type="InterPro" id="IPR008909">
    <property type="entry name" value="DALR_anticod-bd"/>
</dbReference>
<dbReference type="InterPro" id="IPR014729">
    <property type="entry name" value="Rossmann-like_a/b/a_fold"/>
</dbReference>
<dbReference type="InterPro" id="IPR009080">
    <property type="entry name" value="tRNAsynth_Ia_anticodon-bd"/>
</dbReference>
<dbReference type="NCBIfam" id="TIGR00456">
    <property type="entry name" value="argS"/>
    <property type="match status" value="1"/>
</dbReference>
<dbReference type="PANTHER" id="PTHR11956:SF5">
    <property type="entry name" value="ARGININE--TRNA LIGASE, CYTOPLASMIC"/>
    <property type="match status" value="1"/>
</dbReference>
<dbReference type="PANTHER" id="PTHR11956">
    <property type="entry name" value="ARGINYL-TRNA SYNTHETASE"/>
    <property type="match status" value="1"/>
</dbReference>
<dbReference type="Pfam" id="PF03485">
    <property type="entry name" value="Arg_tRNA_synt_N"/>
    <property type="match status" value="1"/>
</dbReference>
<dbReference type="Pfam" id="PF05746">
    <property type="entry name" value="DALR_1"/>
    <property type="match status" value="1"/>
</dbReference>
<dbReference type="Pfam" id="PF00750">
    <property type="entry name" value="tRNA-synt_1d"/>
    <property type="match status" value="1"/>
</dbReference>
<dbReference type="PRINTS" id="PR01038">
    <property type="entry name" value="TRNASYNTHARG"/>
</dbReference>
<dbReference type="SMART" id="SM01016">
    <property type="entry name" value="Arg_tRNA_synt_N"/>
    <property type="match status" value="1"/>
</dbReference>
<dbReference type="SMART" id="SM00836">
    <property type="entry name" value="DALR_1"/>
    <property type="match status" value="1"/>
</dbReference>
<dbReference type="SUPFAM" id="SSF47323">
    <property type="entry name" value="Anticodon-binding domain of a subclass of class I aminoacyl-tRNA synthetases"/>
    <property type="match status" value="1"/>
</dbReference>
<dbReference type="SUPFAM" id="SSF55190">
    <property type="entry name" value="Arginyl-tRNA synthetase (ArgRS), N-terminal 'additional' domain"/>
    <property type="match status" value="1"/>
</dbReference>
<dbReference type="SUPFAM" id="SSF52374">
    <property type="entry name" value="Nucleotidylyl transferase"/>
    <property type="match status" value="1"/>
</dbReference>
<gene>
    <name evidence="1" type="primary">argS</name>
    <name type="ordered locus">LA_1688</name>
</gene>
<accession>Q8F5J3</accession>
<organism>
    <name type="scientific">Leptospira interrogans serogroup Icterohaemorrhagiae serovar Lai (strain 56601)</name>
    <dbReference type="NCBI Taxonomy" id="189518"/>
    <lineage>
        <taxon>Bacteria</taxon>
        <taxon>Pseudomonadati</taxon>
        <taxon>Spirochaetota</taxon>
        <taxon>Spirochaetia</taxon>
        <taxon>Leptospirales</taxon>
        <taxon>Leptospiraceae</taxon>
        <taxon>Leptospira</taxon>
    </lineage>
</organism>